<comment type="function">
    <text evidence="5">Hypertrehalosaemic factors are neuropeptides that elevate the level of trehalose in the hemolymph (trehalose is the major carbohydrate in the hemolymph of insects).</text>
</comment>
<comment type="subcellular location">
    <subcellularLocation>
        <location evidence="5">Secreted</location>
    </subcellularLocation>
</comment>
<comment type="similarity">
    <text evidence="2">Belongs to the AKH/HRTH/RPCH family.</text>
</comment>
<evidence type="ECO:0000250" key="1">
    <source>
        <dbReference type="UniProtKB" id="P67790"/>
    </source>
</evidence>
<evidence type="ECO:0000255" key="2"/>
<evidence type="ECO:0000269" key="3">
    <source>
    </source>
</evidence>
<evidence type="ECO:0000303" key="4">
    <source>
    </source>
</evidence>
<evidence type="ECO:0000305" key="5"/>
<dbReference type="GO" id="GO:0005576">
    <property type="term" value="C:extracellular region"/>
    <property type="evidence" value="ECO:0007669"/>
    <property type="project" value="UniProtKB-SubCell"/>
</dbReference>
<dbReference type="GO" id="GO:0005179">
    <property type="term" value="F:hormone activity"/>
    <property type="evidence" value="ECO:0007669"/>
    <property type="project" value="UniProtKB-KW"/>
</dbReference>
<dbReference type="GO" id="GO:0007218">
    <property type="term" value="P:neuropeptide signaling pathway"/>
    <property type="evidence" value="ECO:0007669"/>
    <property type="project" value="UniProtKB-KW"/>
</dbReference>
<dbReference type="InterPro" id="IPR002047">
    <property type="entry name" value="Adipokinetic_hormone_CS"/>
</dbReference>
<dbReference type="PROSITE" id="PS00256">
    <property type="entry name" value="AKH"/>
    <property type="match status" value="1"/>
</dbReference>
<proteinExistence type="evidence at protein level"/>
<keyword id="KW-0027">Amidation</keyword>
<keyword id="KW-0903">Direct protein sequencing</keyword>
<keyword id="KW-0372">Hormone</keyword>
<keyword id="KW-0527">Neuropeptide</keyword>
<keyword id="KW-0873">Pyrrolidone carboxylic acid</keyword>
<keyword id="KW-0964">Secreted</keyword>
<organism>
    <name type="scientific">Periplaneta australasiae</name>
    <name type="common">Australian cockroach</name>
    <name type="synonym">Blatta australasiae</name>
    <dbReference type="NCBI Taxonomy" id="36975"/>
    <lineage>
        <taxon>Eukaryota</taxon>
        <taxon>Metazoa</taxon>
        <taxon>Ecdysozoa</taxon>
        <taxon>Arthropoda</taxon>
        <taxon>Hexapoda</taxon>
        <taxon>Insecta</taxon>
        <taxon>Pterygota</taxon>
        <taxon>Neoptera</taxon>
        <taxon>Polyneoptera</taxon>
        <taxon>Dictyoptera</taxon>
        <taxon>Blattodea</taxon>
        <taxon>Blattoidea</taxon>
        <taxon>Blattidae</taxon>
        <taxon>Blattinae</taxon>
        <taxon>Periplaneta</taxon>
    </lineage>
</organism>
<reference evidence="5" key="1">
    <citation type="journal article" date="2009" name="BMC Evol. Biol.">
        <title>A proteomic approach for studying insect phylogeny: CAPA peptides of ancient insect taxa (Dictyoptera, Blattoptera) as a test case.</title>
        <authorList>
            <person name="Roth S."/>
            <person name="Fromm B."/>
            <person name="Gaede G."/>
            <person name="Predel R."/>
        </authorList>
    </citation>
    <scope>PROTEIN SEQUENCE</scope>
    <scope>PYROGLUTAMATE FORMATION AT GLN-1</scope>
    <scope>AMIDATION AT TRP-8</scope>
    <source>
        <tissue evidence="3">Corpora cardiaca</tissue>
    </source>
</reference>
<accession>P85703</accession>
<protein>
    <recommendedName>
        <fullName evidence="1">Hypertrehalosaemic factor</fullName>
    </recommendedName>
    <alternativeName>
        <fullName evidence="4">Adipokinetic hormone 1</fullName>
        <shortName evidence="4">PerAu-AKH-1</shortName>
    </alternativeName>
    <alternativeName>
        <fullName evidence="1">Hypertrehalosaemic neuropeptide</fullName>
    </alternativeName>
</protein>
<sequence length="8" mass="991">QVNFSPNW</sequence>
<feature type="peptide" id="PRO_0000378662" description="Hypertrehalosaemic factor" evidence="3">
    <location>
        <begin position="1"/>
        <end position="8"/>
    </location>
</feature>
<feature type="modified residue" description="Pyrrolidone carboxylic acid" evidence="3">
    <location>
        <position position="1"/>
    </location>
</feature>
<feature type="modified residue" description="Tryptophan amide" evidence="3">
    <location>
        <position position="8"/>
    </location>
</feature>
<name>HTF_PERAU</name>